<feature type="chain" id="PRO_0000304731" description="Histone deacetylase 1">
    <location>
        <begin position="1"/>
        <end position="482"/>
    </location>
</feature>
<feature type="region of interest" description="Histone deacetylase">
    <location>
        <begin position="9"/>
        <end position="321"/>
    </location>
</feature>
<feature type="region of interest" description="Disordered" evidence="6">
    <location>
        <begin position="390"/>
        <end position="482"/>
    </location>
</feature>
<feature type="compositionally biased region" description="Acidic residues" evidence="6">
    <location>
        <begin position="390"/>
        <end position="400"/>
    </location>
</feature>
<feature type="compositionally biased region" description="Basic and acidic residues" evidence="6">
    <location>
        <begin position="401"/>
        <end position="416"/>
    </location>
</feature>
<feature type="compositionally biased region" description="Acidic residues" evidence="6">
    <location>
        <begin position="417"/>
        <end position="427"/>
    </location>
</feature>
<feature type="compositionally biased region" description="Basic and acidic residues" evidence="6">
    <location>
        <begin position="443"/>
        <end position="482"/>
    </location>
</feature>
<feature type="active site" evidence="4">
    <location>
        <position position="141"/>
    </location>
</feature>
<feature type="binding site" evidence="2">
    <location>
        <position position="27"/>
    </location>
    <ligand>
        <name>1D-myo-inositol 1,4,5,6-tetrakisphosphate</name>
        <dbReference type="ChEBI" id="CHEBI:57627"/>
    </ligand>
</feature>
<feature type="binding site" evidence="2">
    <location>
        <position position="31"/>
    </location>
    <ligand>
        <name>1D-myo-inositol 1,4,5,6-tetrakisphosphate</name>
        <dbReference type="ChEBI" id="CHEBI:57627"/>
    </ligand>
</feature>
<feature type="binding site" evidence="2">
    <location>
        <position position="176"/>
    </location>
    <ligand>
        <name>Zn(2+)</name>
        <dbReference type="ChEBI" id="CHEBI:29105"/>
    </ligand>
</feature>
<feature type="binding site" evidence="2">
    <location>
        <position position="178"/>
    </location>
    <ligand>
        <name>Zn(2+)</name>
        <dbReference type="ChEBI" id="CHEBI:29105"/>
    </ligand>
</feature>
<feature type="binding site" evidence="2">
    <location>
        <position position="264"/>
    </location>
    <ligand>
        <name>Zn(2+)</name>
        <dbReference type="ChEBI" id="CHEBI:29105"/>
    </ligand>
</feature>
<feature type="binding site" evidence="2">
    <location>
        <position position="270"/>
    </location>
    <ligand>
        <name>1D-myo-inositol 1,4,5,6-tetrakisphosphate</name>
        <dbReference type="ChEBI" id="CHEBI:57627"/>
    </ligand>
</feature>
<feature type="modified residue" description="N6-acetyllysine; alternate" evidence="4">
    <location>
        <position position="74"/>
    </location>
</feature>
<feature type="modified residue" description="N6-acetyllysine" evidence="4">
    <location>
        <position position="220"/>
    </location>
</feature>
<feature type="modified residue" description="S-nitrosocysteine" evidence="3">
    <location>
        <position position="261"/>
    </location>
</feature>
<feature type="modified residue" description="S-nitrosocysteine" evidence="3">
    <location>
        <position position="273"/>
    </location>
</feature>
<feature type="modified residue" description="Phosphoserine" evidence="9 10">
    <location>
        <position position="393"/>
    </location>
</feature>
<feature type="modified residue" description="Phosphoserine" evidence="5">
    <location>
        <position position="406"/>
    </location>
</feature>
<feature type="modified residue" description="Phosphoserine" evidence="4">
    <location>
        <position position="409"/>
    </location>
</feature>
<feature type="modified residue" description="Phosphoserine" evidence="10">
    <location>
        <position position="421"/>
    </location>
</feature>
<feature type="modified residue" description="Phosphoserine" evidence="10">
    <location>
        <position position="423"/>
    </location>
</feature>
<feature type="modified residue" description="N6-methylated lysine; by EHMT2" evidence="4">
    <location>
        <position position="432"/>
    </location>
</feature>
<feature type="cross-link" description="Glycyl lysine isopeptide (Lys-Gly) (interchain with G-Cter in SUMO2); alternate" evidence="5">
    <location>
        <position position="74"/>
    </location>
</feature>
<feature type="cross-link" description="Glycyl lysine isopeptide (Lys-Gly) (interchain with G-Cter in SUMO2)" evidence="4">
    <location>
        <position position="438"/>
    </location>
</feature>
<feature type="cross-link" description="Glycyl lysine isopeptide (Lys-Gly) (interchain with G-Cter in SUMO); alternate" evidence="4">
    <location>
        <position position="444"/>
    </location>
</feature>
<feature type="cross-link" description="Glycyl lysine isopeptide (Lys-Gly) (interchain with G-Cter in SUMO2); alternate" evidence="4">
    <location>
        <position position="444"/>
    </location>
</feature>
<feature type="cross-link" description="Glycyl lysine isopeptide (Lys-Gly) (interchain with G-Cter in SUMO2)" evidence="5">
    <location>
        <position position="456"/>
    </location>
</feature>
<feature type="cross-link" description="Glycyl lysine isopeptide (Lys-Gly) (interchain with G-Cter in SUMO2)" evidence="4">
    <location>
        <position position="457"/>
    </location>
</feature>
<feature type="cross-link" description="Glycyl lysine isopeptide (Lys-Gly) (interchain with G-Cter in SUMO2)" evidence="5">
    <location>
        <position position="473"/>
    </location>
</feature>
<feature type="cross-link" description="Glycyl lysine isopeptide (Lys-Gly) (interchain with G-Cter in SUMO); alternate" evidence="4">
    <location>
        <position position="476"/>
    </location>
</feature>
<feature type="cross-link" description="Glycyl lysine isopeptide (Lys-Gly) (interchain with G-Cter in SUMO2); alternate" evidence="4">
    <location>
        <position position="476"/>
    </location>
</feature>
<feature type="cross-link" description="Glycyl lysine isopeptide (Lys-Gly) (interchain with G-Cter in SUMO2)" evidence="4">
    <location>
        <position position="480"/>
    </location>
</feature>
<reference key="1">
    <citation type="journal article" date="2004" name="Genome Res.">
        <title>The status, quality, and expansion of the NIH full-length cDNA project: the Mammalian Gene Collection (MGC).</title>
        <authorList>
            <consortium name="The MGC Project Team"/>
        </authorList>
    </citation>
    <scope>NUCLEOTIDE SEQUENCE [LARGE SCALE MRNA]</scope>
    <source>
        <tissue>Placenta</tissue>
    </source>
</reference>
<reference key="2">
    <citation type="journal article" date="2006" name="Proc. Natl. Acad. Sci. U.S.A.">
        <title>Quantitative phosphoproteomics of vasopressin-sensitive renal cells: regulation of aquaporin-2 phosphorylation at two sites.</title>
        <authorList>
            <person name="Hoffert J.D."/>
            <person name="Pisitkun T."/>
            <person name="Wang G."/>
            <person name="Shen R.-F."/>
            <person name="Knepper M.A."/>
        </authorList>
    </citation>
    <scope>PHOSPHORYLATION [LARGE SCALE ANALYSIS] AT SER-393</scope>
    <scope>IDENTIFICATION BY MASS SPECTROMETRY [LARGE SCALE ANALYSIS]</scope>
</reference>
<reference key="3">
    <citation type="journal article" date="2012" name="Nat. Commun.">
        <title>Quantitative maps of protein phosphorylation sites across 14 different rat organs and tissues.</title>
        <authorList>
            <person name="Lundby A."/>
            <person name="Secher A."/>
            <person name="Lage K."/>
            <person name="Nordsborg N.B."/>
            <person name="Dmytriyev A."/>
            <person name="Lundby C."/>
            <person name="Olsen J.V."/>
        </authorList>
    </citation>
    <scope>PHOSPHORYLATION [LARGE SCALE ANALYSIS] AT SER-393; SER-421 AND SER-423</scope>
    <scope>IDENTIFICATION BY MASS SPECTROMETRY [LARGE SCALE ANALYSIS]</scope>
</reference>
<reference key="4">
    <citation type="journal article" date="2019" name="J. Cell. Physiol.">
        <title>CHIP attenuates lipopolysaccharide-induced cardiac hypertrophy and apoptosis by promoting NFATc3 proteasomal degradation.</title>
        <authorList>
            <person name="Chao C.N."/>
            <person name="Lai C.H."/>
            <person name="Badrealam K.F."/>
            <person name="Lo J.F."/>
            <person name="Shen C.Y."/>
            <person name="Chen C.H."/>
            <person name="Chen R.J."/>
            <person name="Viswanadha V.P."/>
            <person name="Kuo W.W."/>
            <person name="Huang C.Y."/>
        </authorList>
    </citation>
    <scope>SUBCELLULAR LOCATION</scope>
</reference>
<organism>
    <name type="scientific">Rattus norvegicus</name>
    <name type="common">Rat</name>
    <dbReference type="NCBI Taxonomy" id="10116"/>
    <lineage>
        <taxon>Eukaryota</taxon>
        <taxon>Metazoa</taxon>
        <taxon>Chordata</taxon>
        <taxon>Craniata</taxon>
        <taxon>Vertebrata</taxon>
        <taxon>Euteleostomi</taxon>
        <taxon>Mammalia</taxon>
        <taxon>Eutheria</taxon>
        <taxon>Euarchontoglires</taxon>
        <taxon>Glires</taxon>
        <taxon>Rodentia</taxon>
        <taxon>Myomorpha</taxon>
        <taxon>Muroidea</taxon>
        <taxon>Muridae</taxon>
        <taxon>Murinae</taxon>
        <taxon>Rattus</taxon>
    </lineage>
</organism>
<keyword id="KW-0007">Acetylation</keyword>
<keyword id="KW-0090">Biological rhythms</keyword>
<keyword id="KW-0156">Chromatin regulator</keyword>
<keyword id="KW-0378">Hydrolase</keyword>
<keyword id="KW-1017">Isopeptide bond</keyword>
<keyword id="KW-0479">Metal-binding</keyword>
<keyword id="KW-0488">Methylation</keyword>
<keyword id="KW-0539">Nucleus</keyword>
<keyword id="KW-0597">Phosphoprotein</keyword>
<keyword id="KW-1185">Reference proteome</keyword>
<keyword id="KW-0678">Repressor</keyword>
<keyword id="KW-0702">S-nitrosylation</keyword>
<keyword id="KW-0804">Transcription</keyword>
<keyword id="KW-0805">Transcription regulation</keyword>
<keyword id="KW-0832">Ubl conjugation</keyword>
<keyword id="KW-0862">Zinc</keyword>
<name>HDAC1_RAT</name>
<sequence>MAQTQGTKRKVCYYYDGDVGNYYYGQGHPMKPHRIRMTHNLLLNYGLYRKMEIYRPHKANAEEMTKYHSDDYIKFLRSIRPDNMSEYSKQMQRFNVGEDCPVFDGLFEFCQLSTGGSVASAVKLNKQQTDIAVNWAGGLHHAKKSEASGFCYVNDIVLAILELLKYHQRVLYIDIDIHHGDGVEEAFYTTDRVMTVSFHKYGEYFPGTGDLRDIGAGKGKYYAVNYPLRDGIDDESYEAIFKPVMSKVMEMFQPSAVVLQCGSDSLSGDRLGCFNLTIKGHAKCVEFVKSFNLPMLMLGGGGYTIRNVARCWTYETAVALDTEIPNELPYNDYFEYFGPDFKLHISPSNMTNQNTNEYLEKIKQRLFENLRMLPHAPGVQMQAIPEDAIPEESGDEDEEDPDKRISICSSDKRIACEEEFSDSDEEGEGGRKNSSNFKKAKRVKTEDEKEKDPEEKKEVTEEEKTKEEKPEAKGVKEEVKMA</sequence>
<accession>Q4QQW4</accession>
<protein>
    <recommendedName>
        <fullName>Histone deacetylase 1</fullName>
        <shortName>HD1</shortName>
        <ecNumber evidence="4">3.5.1.98</ecNumber>
    </recommendedName>
    <alternativeName>
        <fullName>Protein deacetylase HDAC1</fullName>
        <ecNumber evidence="4">3.5.1.-</ecNumber>
    </alternativeName>
    <alternativeName>
        <fullName>Protein deacylase HDAC1</fullName>
        <ecNumber evidence="4">3.5.1.-</ecNumber>
    </alternativeName>
</protein>
<comment type="function">
    <text evidence="1 4">Histone deacetylase that catalyzes the deacetylation of lysine residues on the N-terminal part of the core histones (H2A, H2B, H3 and H4). Histone deacetylation gives a tag for epigenetic repression and plays an important role in transcriptional regulation, cell cycle progression and developmental events. Histone deacetylases act via the formation of large multiprotein complexes (By similarity). Acts as a component of the histone deacetylase NuRD complex which participates in the remodeling of chromatin (By similarity). As part of the SIN3B complex is recruited downstream of the constitutively active genes transcriptional start sites through interaction with histones and mitigates histone acetylation and RNA polymerase II progression within transcribed regions contributing to the regulation of transcription (By similarity). Also functions as a deacetylase for non-histone targets, such as NR1D2, RELA, SP1, SP3, STAT3 and TSHZ3 (By similarity). Deacetylates SP proteins, SP1 and SP3, and regulates their function (By similarity). Component of the BRG1-RB1-HDAC1 complex, which negatively regulates the CREST-mediated transcription in resting neurons (By similarity). Upon calcium stimulation, HDAC1 is released from the complex and CREBBP is recruited, which facilitates transcriptional activation (By similarity). Deacetylates TSHZ3 and regulates its transcriptional repressor activity (By similarity). Deacetylates 'Lys-310' in RELA and thereby inhibits the transcriptional activity of NF-kappa-B (By similarity). Deacetylates NR1D2 and abrogates the effect of KAT5-mediated relieving of NR1D2 transcription repression activity (By similarity). Component of a RCOR/GFI/KDM1A/HDAC complex that suppresses, via histone deacetylase (HDAC) recruitment, a number of genes implicated in multilineage blood cell development. Involved in CIART-mediated transcriptional repression of the circadian transcriptional activator: CLOCK-BMAL1 heterodimer. Required for the transcriptional repression of circadian target genes, such as PER1, mediated by the large PER complex or CRY1 through histone deacetylation. In addition to protein deacetylase activity, also has protein-lysine deacylase activity: acts as a protein decrotonylase and delactylase by mediating decrotonylation ((2E)-butenoyl) and delactylation (lactoyl) of histones, respectively (By similarity).</text>
</comment>
<comment type="catalytic activity">
    <reaction evidence="4">
        <text>N(6)-acetyl-L-lysyl-[histone] + H2O = L-lysyl-[histone] + acetate</text>
        <dbReference type="Rhea" id="RHEA:58196"/>
        <dbReference type="Rhea" id="RHEA-COMP:9845"/>
        <dbReference type="Rhea" id="RHEA-COMP:11338"/>
        <dbReference type="ChEBI" id="CHEBI:15377"/>
        <dbReference type="ChEBI" id="CHEBI:29969"/>
        <dbReference type="ChEBI" id="CHEBI:30089"/>
        <dbReference type="ChEBI" id="CHEBI:61930"/>
        <dbReference type="EC" id="3.5.1.98"/>
    </reaction>
    <physiologicalReaction direction="left-to-right" evidence="4">
        <dbReference type="Rhea" id="RHEA:58197"/>
    </physiologicalReaction>
</comment>
<comment type="catalytic activity">
    <reaction evidence="4">
        <text>N(6)-acetyl-L-lysyl-[protein] + H2O = L-lysyl-[protein] + acetate</text>
        <dbReference type="Rhea" id="RHEA:58108"/>
        <dbReference type="Rhea" id="RHEA-COMP:9752"/>
        <dbReference type="Rhea" id="RHEA-COMP:10731"/>
        <dbReference type="ChEBI" id="CHEBI:15377"/>
        <dbReference type="ChEBI" id="CHEBI:29969"/>
        <dbReference type="ChEBI" id="CHEBI:30089"/>
        <dbReference type="ChEBI" id="CHEBI:61930"/>
    </reaction>
    <physiologicalReaction direction="left-to-right" evidence="4">
        <dbReference type="Rhea" id="RHEA:58109"/>
    </physiologicalReaction>
</comment>
<comment type="catalytic activity">
    <reaction evidence="4">
        <text>N(6)-(2E)-butenoyl-L-lysyl-[protein] + H2O = (2E)-2-butenoate + L-lysyl-[protein]</text>
        <dbReference type="Rhea" id="RHEA:69172"/>
        <dbReference type="Rhea" id="RHEA-COMP:9752"/>
        <dbReference type="Rhea" id="RHEA-COMP:13707"/>
        <dbReference type="ChEBI" id="CHEBI:15377"/>
        <dbReference type="ChEBI" id="CHEBI:29969"/>
        <dbReference type="ChEBI" id="CHEBI:35899"/>
        <dbReference type="ChEBI" id="CHEBI:137954"/>
    </reaction>
    <physiologicalReaction direction="left-to-right" evidence="4">
        <dbReference type="Rhea" id="RHEA:69173"/>
    </physiologicalReaction>
</comment>
<comment type="catalytic activity">
    <reaction evidence="4">
        <text>N(6)-[(S)-lactoyl]-L-lysyl-[protein] + H2O = (S)-lactate + L-lysyl-[protein]</text>
        <dbReference type="Rhea" id="RHEA:81387"/>
        <dbReference type="Rhea" id="RHEA-COMP:9752"/>
        <dbReference type="Rhea" id="RHEA-COMP:19466"/>
        <dbReference type="ChEBI" id="CHEBI:15377"/>
        <dbReference type="ChEBI" id="CHEBI:16651"/>
        <dbReference type="ChEBI" id="CHEBI:29969"/>
        <dbReference type="ChEBI" id="CHEBI:231527"/>
    </reaction>
    <physiologicalReaction direction="left-to-right" evidence="4">
        <dbReference type="Rhea" id="RHEA:81388"/>
    </physiologicalReaction>
</comment>
<comment type="cofactor">
    <cofactor evidence="2">
        <name>Zn(2+)</name>
        <dbReference type="ChEBI" id="CHEBI:29105"/>
    </cofactor>
</comment>
<comment type="activity regulation">
    <text evidence="2">Inositol tetraphosphate (1D-myo-inositol 1,4,5,6-tetrakisphosphate) may act as an intermolecular glue between HDAC1 and N-Cor repressor complex components.</text>
</comment>
<comment type="subunit">
    <text evidence="1 4">Part of the core histone deacetylase (HDAC) complex composed of HDAC1, HDAC2, RBBP4 and RBBP7, the core complex associates with SIN3, SAP18 and SAP30 to form the SIN3 HDAC complex. Component of the nucleosome remodeling and deacetylase (NuRD) repressor complex, composed of core proteins MTA1, MTA2, MTA3, RBBP4, RBBP7, HDAC1, HDAC2, MBD2, MBD3, and peripherally associated proteins CDK2AP1, CDK2AP2, GATAD2A, GATAD2B, CHD3, CHD4 and CHD5. The exact stoichiometry of the NuRD complex is unknown, and some subunits such as MBD2 and MBD3, GATAD2A and GATAD2B, and CHD3, CHD4 and CHD5 define mutually exclusive NuRD complexes (By similarity). Component of a BHC histone deacetylase complex that contains HDAC1, HDAC2, HMG20B/BRAF35, KDM1A, RCOR1/CoREST and PHF21A/BHC80 (By similarity). The BHC complex may also contain ZMYM2, ZNF217, ZMYM3, GSE1 and GTF2I (By similarity). Component of a mSin3A corepressor complex that contains SIN3A, SAP130, SUDS3/SAP45, ARID4B/SAP180, HDAC1 and HDAC2 (By similarity). Found in a trimeric complex with APBB1 and TSHZ3; the interaction between HDAC1 and APBB1 is mediated by TSHZ3 (By similarity). Forms a complex comprising APPL1, RUVBL2, APPL2, CTNNB1 and HDAC2 (By similarity). Component of a RCOR/GFI/KDM1A/HDAC complex (By similarity). Part of a complex composed of TRIM28, HDAC1, HDAC2 and EHMT2 (By similarity). Part of a complex containing at least CDYL, MIER1, MIER2, HDAC1 and HDAC2 (By similarity). The large PER complex involved in the histone deacetylation is composed of at least HDAC1, PER2, SFPQ and SIN3A (By similarity). Associates with the 9-1-1 complex; interacts with HUS1 (By similarity). Found in a complex with DNMT3A and HDAC7. Found in a complex with YY1, SIN3A and GON4L (By similarity). Identified in a histone deacetylase complex that contains DNTTIP1, HDAC1 and MIDEAS; this complex assembles into a tetramer that contains four copies of each protein chain (By similarity). Found in a complex composed of at least SINHCAF, SIN3A, HDAC1, SAP30, RBBP4, OGT and TET1 (By similarity). Component of the SIN3B complex, which includes SIN3B, HDAC1, PHF12 and MORF4L1 (By similarity). Interacts with GFI1; the interaction is direct. Interacts directly with GFI1B (By similarity). Interacts with TSHZ3 (via N-terminus); the interaction is direct (By similarity). Interacts with APEX1; the interaction is not dependent on the acetylated status of APEX1 (By similarity). Interacts with BANP. Interacts with BAZ2A/TIP5 (By similarity). Interacts with BCL6 (By similarity). Interacts with BCOR (By similarity). Interacts with BHLHE40/DEC1 (By similarity). Interacts with BRCC3; this interaction is enhanced in the presence of PWWP2B (By similarity). Interacts with BRMS1 (By similarity). Interacts with BRMS1L (By similarity). Interacts with C10orf90/FATS (via its N-terminal); the interaction prevents binding of HDAC1 to CDKN1A/p21 and facilitates the acetylation and stabilization of CDKN1A/p21. Interacts with CBFA2T3 (By similarity). Interacts with CCAR2 (By similarity). Interacts with CDK2AP1 (By similarity). Interacts with CHD3 (By similarity). Interacts with CHD4 (By similarity). Interacts with CHFR (By similarity). Interacts with CIART. Interacts with CDKN1A/p21. Interacts with CDK5 complexed to CDK5R1 (p25). Interacts with CRY1 (By similarity). Interacts with DAXX (By similarity). Interacts with DDIT3/CHOP (By similarity). Interacts with DDX5 (By similarity). Interacts with DHX36; this interaction occurs in a RNA-dependent manner (By similarity). Interacts with DNMT1 (By similarity). Interacts with DNTTIP1 (By similarity). Interacts with E4F1 (By similarity). Interacts with EP300 (By similarity). Interacts with ERCC6 (By similarity). Interacts with GATAD2A (By similarity). Interacts with HCFC1 (By similarity). Interacts with HDAC9 (By similarity). Interacts with HUS1 (By similarity). Interacts with INSM1 (By similarity). Interacts with KDM4A (By similarity). Interacts with KDM5A; this interaction impairs histone deacetylation (By similarity). Interacts with KDM5B (By similarity). Interacts with KLF1 (By similarity). Interacts with MBD3L2 (By similarity). Interacts with MIER1 (By similarity). Interacts with NFE4 (By similarity). Interacts with NR4A2/NURR1 (By similarity). Interacts with NR1D2 (via C-terminus) (By similarity). Interacts with NRIP1. Interacts with NSD2 (By similarity). Interacts with PACS2 (By similarity). Interacts with PHB2 (By similarity). Interacts with PPHLN1 (By similarity). Interacts with PRDM6 (By similarity). Interacts with PRDM16 (By similarity). Interacts with PWWP2A in a MTA1-dependent manner. Interacts with PWWP2B (By similarity). Interacts with RB1 (By similarity). Interacts with RERE. Interacts with SANBR (via the BTB domain). Interacts with SAMSN1 (By similarity). Interacts with SAP30L (By similarity). Interacts with SETDB1 (By similarity). Interacts with SIN3A (By similarity). Interacts with SMAD3 (By similarity). Interacts with SMAD4; positively regulated by ZBTB7A (By similarity). Interacts with SMARCAD1 (By similarity). Interacts with SMARCA4/BRG1 (By similarity). Interacts with SMYD2 (By similarity). Interacts with SMYD4 (via MYND-type zinc finger) (By similarity). Interacts with SP1; the interaction deacetylates SP1 and regulates its transcriptional activity (By similarity). Interacts with SP3; the interaction deacetylates SP3 and regulates its transcriptional activity (By similarity). In vitro, C(18) ceramides increase this interaction and the subsequent SP3 deacetylation and SP3-mediated repression of the TERT promoter (By similarity). Interacts with SPEN/MINT (By similarity). Interacts with SPHK2 (By similarity). Interacts with SUV39H1 (By similarity). Interacts with TGIF (By similarity). Interacts with TGIF2 (By similarity). Interacts with TRAF6 (By similarity). Interacts with TRIM28; the interaction recruits HDAC1 to E2F1 and inhibits its acetylation (By similarity). Interacts with TSC22D3 isoform 1; this interaction affects HDAC1 activity on MYOG promoter and thus inhibits MYOD1 transcriptional activity (By similarity). Interacts with UHRF1 (By similarity). Interacts with UHRF2 (By similarity). Interacts with ZBTB7A (By similarity). Interacts with ZMYND8 (By similarity). Interacts with ZMYND15. Interacts with ZNF431. Interacts with ZNF516; this interaction is enhanced in the presence of PWWP2B. Interacts with ZNF541 (By similarity). Interacts with ZNF638 (By similarity). Interacts with ZNHIT1. Interacts with the non-histone region of MACROH2A1. Identified in a complex with HDAC2, KCTD19, DNTTIP1 and ZNF541. Interacts with MSX3 (By similarity). Interacts with VRK1 (By similarity).</text>
</comment>
<comment type="subcellular location">
    <subcellularLocation>
        <location evidence="7">Nucleus</location>
    </subcellularLocation>
</comment>
<comment type="PTM">
    <text evidence="4">Sumoylated on Lys-444 and Lys-476; which promotes enzymatic activity. Desumoylated by SENP1.</text>
</comment>
<comment type="PTM">
    <text evidence="4">Phosphorylation on Ser-421 and Ser-423 promotes enzymatic activity and interactions with NuRD and SIN3 complexes. Phosphorylated by CDK5.</text>
</comment>
<comment type="PTM">
    <text evidence="4">Ubiquitinated by CHFR and KCTD11, leading to its degradation by the proteasome.</text>
</comment>
<comment type="similarity">
    <text evidence="8">Belongs to the histone deacetylase family. HD type 1 subfamily.</text>
</comment>
<gene>
    <name type="primary">Hdac1</name>
</gene>
<dbReference type="EC" id="3.5.1.98" evidence="4"/>
<dbReference type="EC" id="3.5.1.-" evidence="4"/>
<dbReference type="EMBL" id="BC097943">
    <property type="protein sequence ID" value="AAH97943.1"/>
    <property type="molecule type" value="mRNA"/>
</dbReference>
<dbReference type="EMBL" id="BC107476">
    <property type="protein sequence ID" value="AAI07477.1"/>
    <property type="molecule type" value="mRNA"/>
</dbReference>
<dbReference type="RefSeq" id="NP_001020580.1">
    <property type="nucleotide sequence ID" value="NM_001025409.1"/>
</dbReference>
<dbReference type="SMR" id="Q4QQW4"/>
<dbReference type="BioGRID" id="255695">
    <property type="interactions" value="6"/>
</dbReference>
<dbReference type="FunCoup" id="Q4QQW4">
    <property type="interactions" value="4097"/>
</dbReference>
<dbReference type="IntAct" id="Q4QQW4">
    <property type="interactions" value="4"/>
</dbReference>
<dbReference type="MINT" id="Q4QQW4"/>
<dbReference type="STRING" id="10116.ENSRNOP00000012854"/>
<dbReference type="BindingDB" id="Q4QQW4"/>
<dbReference type="ChEMBL" id="CHEMBL2915"/>
<dbReference type="DrugCentral" id="Q4QQW4"/>
<dbReference type="iPTMnet" id="Q4QQW4"/>
<dbReference type="PhosphoSitePlus" id="Q4QQW4"/>
<dbReference type="jPOST" id="Q4QQW4"/>
<dbReference type="PaxDb" id="10116-ENSRNOP00000012854"/>
<dbReference type="Ensembl" id="ENSRNOT00000012854.7">
    <property type="protein sequence ID" value="ENSRNOP00000012854.5"/>
    <property type="gene ID" value="ENSRNOG00000009568.7"/>
</dbReference>
<dbReference type="GeneID" id="297893"/>
<dbReference type="KEGG" id="rno:297893"/>
<dbReference type="UCSC" id="RGD:619975">
    <property type="organism name" value="rat"/>
</dbReference>
<dbReference type="AGR" id="RGD:1309799"/>
<dbReference type="CTD" id="3065"/>
<dbReference type="RGD" id="1309799">
    <property type="gene designation" value="Hdac1"/>
</dbReference>
<dbReference type="eggNOG" id="KOG1342">
    <property type="taxonomic scope" value="Eukaryota"/>
</dbReference>
<dbReference type="GeneTree" id="ENSGT00940000154301"/>
<dbReference type="HOGENOM" id="CLU_007727_7_4_1"/>
<dbReference type="InParanoid" id="Q4QQW4"/>
<dbReference type="OMA" id="EHRWDKH"/>
<dbReference type="OrthoDB" id="1918432at2759"/>
<dbReference type="PhylomeDB" id="Q4QQW4"/>
<dbReference type="TreeFam" id="TF106171"/>
<dbReference type="Reactome" id="R-RNO-1538133">
    <property type="pathway name" value="G0 and Early G1"/>
</dbReference>
<dbReference type="Reactome" id="R-RNO-201722">
    <property type="pathway name" value="Formation of the beta-catenin:TCF transactivating complex"/>
</dbReference>
<dbReference type="Reactome" id="R-RNO-2173795">
    <property type="pathway name" value="Downregulation of SMAD2/3:SMAD4 transcriptional activity"/>
</dbReference>
<dbReference type="Reactome" id="R-RNO-3214815">
    <property type="pathway name" value="HDACs deacetylate histones"/>
</dbReference>
<dbReference type="Reactome" id="R-RNO-350054">
    <property type="pathway name" value="Notch-HLH transcription pathway"/>
</dbReference>
<dbReference type="Reactome" id="R-RNO-3769402">
    <property type="pathway name" value="Deactivation of the beta-catenin transactivating complex"/>
</dbReference>
<dbReference type="Reactome" id="R-RNO-4551638">
    <property type="pathway name" value="SUMOylation of chromatin organization proteins"/>
</dbReference>
<dbReference type="Reactome" id="R-RNO-6804758">
    <property type="pathway name" value="Regulation of TP53 Activity through Acetylation"/>
</dbReference>
<dbReference type="Reactome" id="R-RNO-73762">
    <property type="pathway name" value="RNA Polymerase I Transcription Initiation"/>
</dbReference>
<dbReference type="Reactome" id="R-RNO-8936459">
    <property type="pathway name" value="RUNX1 regulates genes involved in megakaryocyte differentiation and platelet function"/>
</dbReference>
<dbReference type="Reactome" id="R-RNO-8943724">
    <property type="pathway name" value="Regulation of PTEN gene transcription"/>
</dbReference>
<dbReference type="Reactome" id="R-RNO-9018519">
    <property type="pathway name" value="Estrogen-dependent gene expression"/>
</dbReference>
<dbReference type="Reactome" id="R-RNO-9022692">
    <property type="pathway name" value="Regulation of MECP2 expression and activity"/>
</dbReference>
<dbReference type="Reactome" id="R-RNO-9701898">
    <property type="pathway name" value="STAT3 nuclear events downstream of ALK signaling"/>
</dbReference>
<dbReference type="Reactome" id="R-RNO-9824594">
    <property type="pathway name" value="Regulation of MITF-M-dependent genes involved in apoptosis"/>
</dbReference>
<dbReference type="Reactome" id="R-RNO-9825892">
    <property type="pathway name" value="Regulation of MITF-M-dependent genes involved in cell cycle and proliferation"/>
</dbReference>
<dbReference type="Reactome" id="R-RNO-983231">
    <property type="pathway name" value="Factors involved in megakaryocyte development and platelet production"/>
</dbReference>
<dbReference type="PRO" id="PR:Q4QQW4"/>
<dbReference type="Proteomes" id="UP000002494">
    <property type="component" value="Chromosome 5"/>
</dbReference>
<dbReference type="Bgee" id="ENSRNOG00000009568">
    <property type="expression patterns" value="Expressed in thymus and 20 other cell types or tissues"/>
</dbReference>
<dbReference type="GO" id="GO:0000785">
    <property type="term" value="C:chromatin"/>
    <property type="evidence" value="ECO:0000314"/>
    <property type="project" value="RGD"/>
</dbReference>
<dbReference type="GO" id="GO:0005829">
    <property type="term" value="C:cytosol"/>
    <property type="evidence" value="ECO:0000266"/>
    <property type="project" value="RGD"/>
</dbReference>
<dbReference type="GO" id="GO:0000792">
    <property type="term" value="C:heterochromatin"/>
    <property type="evidence" value="ECO:0000266"/>
    <property type="project" value="RGD"/>
</dbReference>
<dbReference type="GO" id="GO:0000118">
    <property type="term" value="C:histone deacetylase complex"/>
    <property type="evidence" value="ECO:0000266"/>
    <property type="project" value="RGD"/>
</dbReference>
<dbReference type="GO" id="GO:0043025">
    <property type="term" value="C:neuronal cell body"/>
    <property type="evidence" value="ECO:0000266"/>
    <property type="project" value="RGD"/>
</dbReference>
<dbReference type="GO" id="GO:0005654">
    <property type="term" value="C:nucleoplasm"/>
    <property type="evidence" value="ECO:0000266"/>
    <property type="project" value="RGD"/>
</dbReference>
<dbReference type="GO" id="GO:0005634">
    <property type="term" value="C:nucleus"/>
    <property type="evidence" value="ECO:0000314"/>
    <property type="project" value="UniProtKB"/>
</dbReference>
<dbReference type="GO" id="GO:0016581">
    <property type="term" value="C:NuRD complex"/>
    <property type="evidence" value="ECO:0000250"/>
    <property type="project" value="UniProtKB"/>
</dbReference>
<dbReference type="GO" id="GO:0048471">
    <property type="term" value="C:perinuclear region of cytoplasm"/>
    <property type="evidence" value="ECO:0000314"/>
    <property type="project" value="RGD"/>
</dbReference>
<dbReference type="GO" id="GO:0032991">
    <property type="term" value="C:protein-containing complex"/>
    <property type="evidence" value="ECO:0000314"/>
    <property type="project" value="RGD"/>
</dbReference>
<dbReference type="GO" id="GO:0070822">
    <property type="term" value="C:Sin3-type complex"/>
    <property type="evidence" value="ECO:0000266"/>
    <property type="project" value="RGD"/>
</dbReference>
<dbReference type="GO" id="GO:0005667">
    <property type="term" value="C:transcription regulator complex"/>
    <property type="evidence" value="ECO:0000266"/>
    <property type="project" value="RGD"/>
</dbReference>
<dbReference type="GO" id="GO:0017053">
    <property type="term" value="C:transcription repressor complex"/>
    <property type="evidence" value="ECO:0000266"/>
    <property type="project" value="RGD"/>
</dbReference>
<dbReference type="GO" id="GO:0003682">
    <property type="term" value="F:chromatin binding"/>
    <property type="evidence" value="ECO:0000314"/>
    <property type="project" value="RGD"/>
</dbReference>
<dbReference type="GO" id="GO:0001046">
    <property type="term" value="F:core promoter sequence-specific DNA binding"/>
    <property type="evidence" value="ECO:0000266"/>
    <property type="project" value="RGD"/>
</dbReference>
<dbReference type="GO" id="GO:0019213">
    <property type="term" value="F:deacetylase activity"/>
    <property type="evidence" value="ECO:0000314"/>
    <property type="project" value="RGD"/>
</dbReference>
<dbReference type="GO" id="GO:0003677">
    <property type="term" value="F:DNA binding"/>
    <property type="evidence" value="ECO:0000266"/>
    <property type="project" value="RGD"/>
</dbReference>
<dbReference type="GO" id="GO:0140297">
    <property type="term" value="F:DNA-binding transcription factor binding"/>
    <property type="evidence" value="ECO:0000353"/>
    <property type="project" value="ARUK-UCL"/>
</dbReference>
<dbReference type="GO" id="GO:0070888">
    <property type="term" value="F:E-box binding"/>
    <property type="evidence" value="ECO:0000266"/>
    <property type="project" value="RGD"/>
</dbReference>
<dbReference type="GO" id="GO:0019899">
    <property type="term" value="F:enzyme binding"/>
    <property type="evidence" value="ECO:0000266"/>
    <property type="project" value="RGD"/>
</dbReference>
<dbReference type="GO" id="GO:0004407">
    <property type="term" value="F:histone deacetylase activity"/>
    <property type="evidence" value="ECO:0000250"/>
    <property type="project" value="UniProtKB"/>
</dbReference>
<dbReference type="GO" id="GO:0141221">
    <property type="term" value="F:histone deacetylase activity, hydrolytic mechanism"/>
    <property type="evidence" value="ECO:0007669"/>
    <property type="project" value="UniProtKB-EC"/>
</dbReference>
<dbReference type="GO" id="GO:0042826">
    <property type="term" value="F:histone deacetylase binding"/>
    <property type="evidence" value="ECO:0000266"/>
    <property type="project" value="RGD"/>
</dbReference>
<dbReference type="GO" id="GO:0160009">
    <property type="term" value="F:histone decrotonylase activity"/>
    <property type="evidence" value="ECO:0000250"/>
    <property type="project" value="UniProtKB"/>
</dbReference>
<dbReference type="GO" id="GO:0035851">
    <property type="term" value="F:Krueppel-associated box domain binding"/>
    <property type="evidence" value="ECO:0000266"/>
    <property type="project" value="RGD"/>
</dbReference>
<dbReference type="GO" id="GO:0046872">
    <property type="term" value="F:metal ion binding"/>
    <property type="evidence" value="ECO:0007669"/>
    <property type="project" value="UniProtKB-KW"/>
</dbReference>
<dbReference type="GO" id="GO:0051059">
    <property type="term" value="F:NF-kappaB binding"/>
    <property type="evidence" value="ECO:0000266"/>
    <property type="project" value="RGD"/>
</dbReference>
<dbReference type="GO" id="GO:0002039">
    <property type="term" value="F:p53 binding"/>
    <property type="evidence" value="ECO:0000266"/>
    <property type="project" value="RGD"/>
</dbReference>
<dbReference type="GO" id="GO:1990841">
    <property type="term" value="F:promoter-specific chromatin binding"/>
    <property type="evidence" value="ECO:0000266"/>
    <property type="project" value="RGD"/>
</dbReference>
<dbReference type="GO" id="GO:0033558">
    <property type="term" value="F:protein lysine deacetylase activity"/>
    <property type="evidence" value="ECO:0000266"/>
    <property type="project" value="RGD"/>
</dbReference>
<dbReference type="GO" id="GO:0160216">
    <property type="term" value="F:protein lysine delactylase activity"/>
    <property type="evidence" value="ECO:0000250"/>
    <property type="project" value="UniProtKB"/>
</dbReference>
<dbReference type="GO" id="GO:0044877">
    <property type="term" value="F:protein-containing complex binding"/>
    <property type="evidence" value="ECO:0000314"/>
    <property type="project" value="RGD"/>
</dbReference>
<dbReference type="GO" id="GO:0000978">
    <property type="term" value="F:RNA polymerase II cis-regulatory region sequence-specific DNA binding"/>
    <property type="evidence" value="ECO:0000266"/>
    <property type="project" value="RGD"/>
</dbReference>
<dbReference type="GO" id="GO:0000979">
    <property type="term" value="F:RNA polymerase II core promoter sequence-specific DNA binding"/>
    <property type="evidence" value="ECO:0000266"/>
    <property type="project" value="RGD"/>
</dbReference>
<dbReference type="GO" id="GO:0061629">
    <property type="term" value="F:RNA polymerase II-specific DNA-binding transcription factor binding"/>
    <property type="evidence" value="ECO:0000266"/>
    <property type="project" value="RGD"/>
</dbReference>
<dbReference type="GO" id="GO:0000976">
    <property type="term" value="F:transcription cis-regulatory region binding"/>
    <property type="evidence" value="ECO:0000266"/>
    <property type="project" value="RGD"/>
</dbReference>
<dbReference type="GO" id="GO:0003714">
    <property type="term" value="F:transcription corepressor activity"/>
    <property type="evidence" value="ECO:0000266"/>
    <property type="project" value="RGD"/>
</dbReference>
<dbReference type="GO" id="GO:0001222">
    <property type="term" value="F:transcription corepressor binding"/>
    <property type="evidence" value="ECO:0000266"/>
    <property type="project" value="RGD"/>
</dbReference>
<dbReference type="GO" id="GO:0034599">
    <property type="term" value="P:cellular response to oxidative stress"/>
    <property type="evidence" value="ECO:0000314"/>
    <property type="project" value="RGD"/>
</dbReference>
<dbReference type="GO" id="GO:0036120">
    <property type="term" value="P:cellular response to platelet-derived growth factor stimulus"/>
    <property type="evidence" value="ECO:0000316"/>
    <property type="project" value="BHF-UCL"/>
</dbReference>
<dbReference type="GO" id="GO:0071356">
    <property type="term" value="P:cellular response to tumor necrosis factor"/>
    <property type="evidence" value="ECO:0000270"/>
    <property type="project" value="RGD"/>
</dbReference>
<dbReference type="GO" id="GO:0006338">
    <property type="term" value="P:chromatin remodeling"/>
    <property type="evidence" value="ECO:0000266"/>
    <property type="project" value="RGD"/>
</dbReference>
<dbReference type="GO" id="GO:0032922">
    <property type="term" value="P:circadian regulation of gene expression"/>
    <property type="evidence" value="ECO:0000250"/>
    <property type="project" value="UniProtKB"/>
</dbReference>
<dbReference type="GO" id="GO:0007623">
    <property type="term" value="P:circadian rhythm"/>
    <property type="evidence" value="ECO:0000266"/>
    <property type="project" value="RGD"/>
</dbReference>
<dbReference type="GO" id="GO:0006346">
    <property type="term" value="P:DNA methylation-dependent constitutive heterochromatin formation"/>
    <property type="evidence" value="ECO:0000266"/>
    <property type="project" value="RGD"/>
</dbReference>
<dbReference type="GO" id="GO:0042733">
    <property type="term" value="P:embryonic digit morphogenesis"/>
    <property type="evidence" value="ECO:0000266"/>
    <property type="project" value="RGD"/>
</dbReference>
<dbReference type="GO" id="GO:0007492">
    <property type="term" value="P:endoderm development"/>
    <property type="evidence" value="ECO:0000266"/>
    <property type="project" value="RGD"/>
</dbReference>
<dbReference type="GO" id="GO:0009913">
    <property type="term" value="P:epidermal cell differentiation"/>
    <property type="evidence" value="ECO:0000266"/>
    <property type="project" value="RGD"/>
</dbReference>
<dbReference type="GO" id="GO:0061029">
    <property type="term" value="P:eyelid development in camera-type eye"/>
    <property type="evidence" value="ECO:0000266"/>
    <property type="project" value="RGD"/>
</dbReference>
<dbReference type="GO" id="GO:0061198">
    <property type="term" value="P:fungiform papilla formation"/>
    <property type="evidence" value="ECO:0000266"/>
    <property type="project" value="RGD"/>
</dbReference>
<dbReference type="GO" id="GO:0060789">
    <property type="term" value="P:hair follicle placode formation"/>
    <property type="evidence" value="ECO:0000266"/>
    <property type="project" value="RGD"/>
</dbReference>
<dbReference type="GO" id="GO:0031507">
    <property type="term" value="P:heterochromatin formation"/>
    <property type="evidence" value="ECO:0000318"/>
    <property type="project" value="GO_Central"/>
</dbReference>
<dbReference type="GO" id="GO:0021766">
    <property type="term" value="P:hippocampus development"/>
    <property type="evidence" value="ECO:0000266"/>
    <property type="project" value="RGD"/>
</dbReference>
<dbReference type="GO" id="GO:0060766">
    <property type="term" value="P:negative regulation of androgen receptor signaling pathway"/>
    <property type="evidence" value="ECO:0000266"/>
    <property type="project" value="RGD"/>
</dbReference>
<dbReference type="GO" id="GO:0043066">
    <property type="term" value="P:negative regulation of apoptotic process"/>
    <property type="evidence" value="ECO:0000266"/>
    <property type="project" value="RGD"/>
</dbReference>
<dbReference type="GO" id="GO:0043124">
    <property type="term" value="P:negative regulation of canonical NF-kappaB signal transduction"/>
    <property type="evidence" value="ECO:0000266"/>
    <property type="project" value="RGD"/>
</dbReference>
<dbReference type="GO" id="GO:0090090">
    <property type="term" value="P:negative regulation of canonical Wnt signaling pathway"/>
    <property type="evidence" value="ECO:0000266"/>
    <property type="project" value="RGD"/>
</dbReference>
<dbReference type="GO" id="GO:0008285">
    <property type="term" value="P:negative regulation of cell population proliferation"/>
    <property type="evidence" value="ECO:0000314"/>
    <property type="project" value="RGD"/>
</dbReference>
<dbReference type="GO" id="GO:0045892">
    <property type="term" value="P:negative regulation of DNA-templated transcription"/>
    <property type="evidence" value="ECO:0000314"/>
    <property type="project" value="RGD"/>
</dbReference>
<dbReference type="GO" id="GO:0010629">
    <property type="term" value="P:negative regulation of gene expression"/>
    <property type="evidence" value="ECO:0000266"/>
    <property type="project" value="RGD"/>
</dbReference>
<dbReference type="GO" id="GO:0045814">
    <property type="term" value="P:negative regulation of gene expression, epigenetic"/>
    <property type="evidence" value="ECO:0000266"/>
    <property type="project" value="RGD"/>
</dbReference>
<dbReference type="GO" id="GO:0046676">
    <property type="term" value="P:negative regulation of insulin secretion"/>
    <property type="evidence" value="ECO:0000315"/>
    <property type="project" value="RGD"/>
</dbReference>
<dbReference type="GO" id="GO:2001243">
    <property type="term" value="P:negative regulation of intrinsic apoptotic signaling pathway"/>
    <property type="evidence" value="ECO:0000266"/>
    <property type="project" value="RGD"/>
</dbReference>
<dbReference type="GO" id="GO:0043524">
    <property type="term" value="P:negative regulation of neuron apoptotic process"/>
    <property type="evidence" value="ECO:0000315"/>
    <property type="project" value="RGD"/>
</dbReference>
<dbReference type="GO" id="GO:0000122">
    <property type="term" value="P:negative regulation of transcription by RNA polymerase II"/>
    <property type="evidence" value="ECO:0000266"/>
    <property type="project" value="RGD"/>
</dbReference>
<dbReference type="GO" id="GO:0030182">
    <property type="term" value="P:neuron differentiation"/>
    <property type="evidence" value="ECO:0000266"/>
    <property type="project" value="RGD"/>
</dbReference>
<dbReference type="GO" id="GO:0042475">
    <property type="term" value="P:odontogenesis of dentin-containing tooth"/>
    <property type="evidence" value="ECO:0000266"/>
    <property type="project" value="RGD"/>
</dbReference>
<dbReference type="GO" id="GO:0048709">
    <property type="term" value="P:oligodendrocyte differentiation"/>
    <property type="evidence" value="ECO:0000266"/>
    <property type="project" value="RGD"/>
</dbReference>
<dbReference type="GO" id="GO:0008284">
    <property type="term" value="P:positive regulation of cell population proliferation"/>
    <property type="evidence" value="ECO:0000315"/>
    <property type="project" value="RGD"/>
</dbReference>
<dbReference type="GO" id="GO:2000343">
    <property type="term" value="P:positive regulation of chemokine (C-X-C motif) ligand 2 production"/>
    <property type="evidence" value="ECO:0000315"/>
    <property type="project" value="RGD"/>
</dbReference>
<dbReference type="GO" id="GO:0045893">
    <property type="term" value="P:positive regulation of DNA-templated transcription"/>
    <property type="evidence" value="ECO:0000266"/>
    <property type="project" value="RGD"/>
</dbReference>
<dbReference type="GO" id="GO:0010628">
    <property type="term" value="P:positive regulation of gene expression"/>
    <property type="evidence" value="ECO:0000316"/>
    <property type="project" value="BHF-UCL"/>
</dbReference>
<dbReference type="GO" id="GO:0032732">
    <property type="term" value="P:positive regulation of interleukin-1 production"/>
    <property type="evidence" value="ECO:0000315"/>
    <property type="project" value="RGD"/>
</dbReference>
<dbReference type="GO" id="GO:0033148">
    <property type="term" value="P:positive regulation of intracellular estrogen receptor signaling pathway"/>
    <property type="evidence" value="ECO:0000266"/>
    <property type="project" value="RGD"/>
</dbReference>
<dbReference type="GO" id="GO:0048714">
    <property type="term" value="P:positive regulation of oligodendrocyte differentiation"/>
    <property type="evidence" value="ECO:0000315"/>
    <property type="project" value="RGD"/>
</dbReference>
<dbReference type="GO" id="GO:0048661">
    <property type="term" value="P:positive regulation of smooth muscle cell proliferation"/>
    <property type="evidence" value="ECO:0000316"/>
    <property type="project" value="BHF-UCL"/>
</dbReference>
<dbReference type="GO" id="GO:0045944">
    <property type="term" value="P:positive regulation of transcription by RNA polymerase II"/>
    <property type="evidence" value="ECO:0000266"/>
    <property type="project" value="RGD"/>
</dbReference>
<dbReference type="GO" id="GO:0032760">
    <property type="term" value="P:positive regulation of tumor necrosis factor production"/>
    <property type="evidence" value="ECO:0000315"/>
    <property type="project" value="RGD"/>
</dbReference>
<dbReference type="GO" id="GO:2000676">
    <property type="term" value="P:positive regulation of type B pancreatic cell apoptotic process"/>
    <property type="evidence" value="ECO:0000315"/>
    <property type="project" value="RGD"/>
</dbReference>
<dbReference type="GO" id="GO:0006357">
    <property type="term" value="P:regulation of transcription by RNA polymerase II"/>
    <property type="evidence" value="ECO:0000266"/>
    <property type="project" value="RGD"/>
</dbReference>
<dbReference type="GO" id="GO:0001975">
    <property type="term" value="P:response to amphetamine"/>
    <property type="evidence" value="ECO:0000315"/>
    <property type="project" value="RGD"/>
</dbReference>
<dbReference type="GO" id="GO:0031000">
    <property type="term" value="P:response to caffeine"/>
    <property type="evidence" value="ECO:0000270"/>
    <property type="project" value="RGD"/>
</dbReference>
<dbReference type="GO" id="GO:0055093">
    <property type="term" value="P:response to hyperoxia"/>
    <property type="evidence" value="ECO:0000270"/>
    <property type="project" value="RGD"/>
</dbReference>
<dbReference type="GO" id="GO:0032496">
    <property type="term" value="P:response to lipopolysaccharide"/>
    <property type="evidence" value="ECO:0000270"/>
    <property type="project" value="RGD"/>
</dbReference>
<dbReference type="GO" id="GO:0009410">
    <property type="term" value="P:response to xenobiotic stimulus"/>
    <property type="evidence" value="ECO:0000270"/>
    <property type="project" value="RGD"/>
</dbReference>
<dbReference type="CDD" id="cd10010">
    <property type="entry name" value="HDAC1"/>
    <property type="match status" value="1"/>
</dbReference>
<dbReference type="FunFam" id="3.40.800.20:FF:000003">
    <property type="entry name" value="Histone deacetylase"/>
    <property type="match status" value="1"/>
</dbReference>
<dbReference type="Gene3D" id="3.40.800.20">
    <property type="entry name" value="Histone deacetylase domain"/>
    <property type="match status" value="1"/>
</dbReference>
<dbReference type="InterPro" id="IPR050284">
    <property type="entry name" value="HDAC_PDAC"/>
</dbReference>
<dbReference type="InterPro" id="IPR000286">
    <property type="entry name" value="His_deacetylse"/>
</dbReference>
<dbReference type="InterPro" id="IPR003084">
    <property type="entry name" value="His_deacetylse_1"/>
</dbReference>
<dbReference type="InterPro" id="IPR023801">
    <property type="entry name" value="His_deacetylse_dom"/>
</dbReference>
<dbReference type="InterPro" id="IPR037138">
    <property type="entry name" value="His_deacetylse_dom_sf"/>
</dbReference>
<dbReference type="InterPro" id="IPR023696">
    <property type="entry name" value="Ureohydrolase_dom_sf"/>
</dbReference>
<dbReference type="PANTHER" id="PTHR10625:SF49">
    <property type="entry name" value="HISTONE DEACETYLASE 1"/>
    <property type="match status" value="1"/>
</dbReference>
<dbReference type="PANTHER" id="PTHR10625">
    <property type="entry name" value="HISTONE DEACETYLASE HDAC1-RELATED"/>
    <property type="match status" value="1"/>
</dbReference>
<dbReference type="Pfam" id="PF00850">
    <property type="entry name" value="Hist_deacetyl"/>
    <property type="match status" value="1"/>
</dbReference>
<dbReference type="PIRSF" id="PIRSF037913">
    <property type="entry name" value="His_deacetylse_1"/>
    <property type="match status" value="1"/>
</dbReference>
<dbReference type="PRINTS" id="PR01270">
    <property type="entry name" value="HDASUPER"/>
</dbReference>
<dbReference type="PRINTS" id="PR01271">
    <property type="entry name" value="HISDACETLASE"/>
</dbReference>
<dbReference type="SUPFAM" id="SSF52768">
    <property type="entry name" value="Arginase/deacetylase"/>
    <property type="match status" value="1"/>
</dbReference>
<evidence type="ECO:0000250" key="1">
    <source>
        <dbReference type="UniProtKB" id="O09106"/>
    </source>
</evidence>
<evidence type="ECO:0000250" key="2">
    <source>
        <dbReference type="UniProtKB" id="O15379"/>
    </source>
</evidence>
<evidence type="ECO:0000250" key="3">
    <source>
        <dbReference type="UniProtKB" id="P70288"/>
    </source>
</evidence>
<evidence type="ECO:0000250" key="4">
    <source>
        <dbReference type="UniProtKB" id="Q13547"/>
    </source>
</evidence>
<evidence type="ECO:0000250" key="5">
    <source>
        <dbReference type="UniProtKB" id="Q92769"/>
    </source>
</evidence>
<evidence type="ECO:0000256" key="6">
    <source>
        <dbReference type="SAM" id="MobiDB-lite"/>
    </source>
</evidence>
<evidence type="ECO:0000269" key="7">
    <source>
    </source>
</evidence>
<evidence type="ECO:0000305" key="8"/>
<evidence type="ECO:0007744" key="9">
    <source>
    </source>
</evidence>
<evidence type="ECO:0007744" key="10">
    <source>
    </source>
</evidence>
<proteinExistence type="evidence at protein level"/>